<gene>
    <name evidence="1" type="primary">rplM</name>
    <name type="ordered locus">RSKD131_1329</name>
</gene>
<comment type="function">
    <text evidence="1">This protein is one of the early assembly proteins of the 50S ribosomal subunit, although it is not seen to bind rRNA by itself. It is important during the early stages of 50S assembly.</text>
</comment>
<comment type="subunit">
    <text evidence="1">Part of the 50S ribosomal subunit.</text>
</comment>
<comment type="similarity">
    <text evidence="1">Belongs to the universal ribosomal protein uL13 family.</text>
</comment>
<protein>
    <recommendedName>
        <fullName evidence="1">Large ribosomal subunit protein uL13</fullName>
    </recommendedName>
    <alternativeName>
        <fullName evidence="2">50S ribosomal protein L13</fullName>
    </alternativeName>
</protein>
<keyword id="KW-0687">Ribonucleoprotein</keyword>
<keyword id="KW-0689">Ribosomal protein</keyword>
<feature type="chain" id="PRO_1000166882" description="Large ribosomal subunit protein uL13">
    <location>
        <begin position="1"/>
        <end position="154"/>
    </location>
</feature>
<dbReference type="EMBL" id="CP001150">
    <property type="protein sequence ID" value="ACM01189.1"/>
    <property type="molecule type" value="Genomic_DNA"/>
</dbReference>
<dbReference type="RefSeq" id="WP_002720164.1">
    <property type="nucleotide sequence ID" value="NC_011963.1"/>
</dbReference>
<dbReference type="SMR" id="B9KT43"/>
<dbReference type="GeneID" id="67446748"/>
<dbReference type="KEGG" id="rsk:RSKD131_1329"/>
<dbReference type="HOGENOM" id="CLU_082184_2_0_5"/>
<dbReference type="GO" id="GO:0022625">
    <property type="term" value="C:cytosolic large ribosomal subunit"/>
    <property type="evidence" value="ECO:0007669"/>
    <property type="project" value="TreeGrafter"/>
</dbReference>
<dbReference type="GO" id="GO:0003729">
    <property type="term" value="F:mRNA binding"/>
    <property type="evidence" value="ECO:0007669"/>
    <property type="project" value="TreeGrafter"/>
</dbReference>
<dbReference type="GO" id="GO:0003735">
    <property type="term" value="F:structural constituent of ribosome"/>
    <property type="evidence" value="ECO:0007669"/>
    <property type="project" value="InterPro"/>
</dbReference>
<dbReference type="GO" id="GO:0017148">
    <property type="term" value="P:negative regulation of translation"/>
    <property type="evidence" value="ECO:0007669"/>
    <property type="project" value="TreeGrafter"/>
</dbReference>
<dbReference type="GO" id="GO:0006412">
    <property type="term" value="P:translation"/>
    <property type="evidence" value="ECO:0007669"/>
    <property type="project" value="UniProtKB-UniRule"/>
</dbReference>
<dbReference type="CDD" id="cd00392">
    <property type="entry name" value="Ribosomal_L13"/>
    <property type="match status" value="1"/>
</dbReference>
<dbReference type="FunFam" id="3.90.1180.10:FF:000001">
    <property type="entry name" value="50S ribosomal protein L13"/>
    <property type="match status" value="1"/>
</dbReference>
<dbReference type="Gene3D" id="3.90.1180.10">
    <property type="entry name" value="Ribosomal protein L13"/>
    <property type="match status" value="1"/>
</dbReference>
<dbReference type="HAMAP" id="MF_01366">
    <property type="entry name" value="Ribosomal_uL13"/>
    <property type="match status" value="1"/>
</dbReference>
<dbReference type="InterPro" id="IPR005822">
    <property type="entry name" value="Ribosomal_uL13"/>
</dbReference>
<dbReference type="InterPro" id="IPR005823">
    <property type="entry name" value="Ribosomal_uL13_bac-type"/>
</dbReference>
<dbReference type="InterPro" id="IPR036899">
    <property type="entry name" value="Ribosomal_uL13_sf"/>
</dbReference>
<dbReference type="NCBIfam" id="TIGR01066">
    <property type="entry name" value="rplM_bact"/>
    <property type="match status" value="1"/>
</dbReference>
<dbReference type="PANTHER" id="PTHR11545:SF2">
    <property type="entry name" value="LARGE RIBOSOMAL SUBUNIT PROTEIN UL13M"/>
    <property type="match status" value="1"/>
</dbReference>
<dbReference type="PANTHER" id="PTHR11545">
    <property type="entry name" value="RIBOSOMAL PROTEIN L13"/>
    <property type="match status" value="1"/>
</dbReference>
<dbReference type="Pfam" id="PF00572">
    <property type="entry name" value="Ribosomal_L13"/>
    <property type="match status" value="1"/>
</dbReference>
<dbReference type="PIRSF" id="PIRSF002181">
    <property type="entry name" value="Ribosomal_L13"/>
    <property type="match status" value="1"/>
</dbReference>
<dbReference type="SUPFAM" id="SSF52161">
    <property type="entry name" value="Ribosomal protein L13"/>
    <property type="match status" value="1"/>
</dbReference>
<organism>
    <name type="scientific">Cereibacter sphaeroides (strain KD131 / KCTC 12085)</name>
    <name type="common">Rhodobacter sphaeroides</name>
    <dbReference type="NCBI Taxonomy" id="557760"/>
    <lineage>
        <taxon>Bacteria</taxon>
        <taxon>Pseudomonadati</taxon>
        <taxon>Pseudomonadota</taxon>
        <taxon>Alphaproteobacteria</taxon>
        <taxon>Rhodobacterales</taxon>
        <taxon>Paracoccaceae</taxon>
        <taxon>Cereibacter</taxon>
    </lineage>
</organism>
<sequence>MKTFTATPADIEKKWILIDAEGVVLGRLATIVANILRGKNKPTFTPHMDMGDNVIVINADKVQMTGNKRADKRYYWHTGHPGGVKFRTAEQVLEGAHPERVVLKAVERMISRNSLGRQQMTNLRVYAGAEHPHEAQQPTVLDVKSLNPKNTRSA</sequence>
<name>RL13_CERSK</name>
<reference key="1">
    <citation type="journal article" date="2009" name="J. Bacteriol.">
        <title>Complete genome sequence of Rhodobacter sphaeroides KD131.</title>
        <authorList>
            <person name="Lim S.-K."/>
            <person name="Kim S.J."/>
            <person name="Cha S.H."/>
            <person name="Oh Y.-K."/>
            <person name="Rhee H.-J."/>
            <person name="Kim M.-S."/>
            <person name="Lee J.K."/>
        </authorList>
    </citation>
    <scope>NUCLEOTIDE SEQUENCE [LARGE SCALE GENOMIC DNA]</scope>
    <source>
        <strain>KD131 / KCTC 12085</strain>
    </source>
</reference>
<evidence type="ECO:0000255" key="1">
    <source>
        <dbReference type="HAMAP-Rule" id="MF_01366"/>
    </source>
</evidence>
<evidence type="ECO:0000305" key="2"/>
<accession>B9KT43</accession>
<proteinExistence type="inferred from homology"/>